<comment type="function">
    <text evidence="1">Catalyzes the reversible reaction in which hydroxymethyl group from 5,10-methylenetetrahydrofolate is transferred onto alpha-ketoisovalerate to form ketopantoate.</text>
</comment>
<comment type="catalytic activity">
    <reaction evidence="1">
        <text>3-methyl-2-oxobutanoate + (6R)-5,10-methylene-5,6,7,8-tetrahydrofolate + H2O = 2-dehydropantoate + (6S)-5,6,7,8-tetrahydrofolate</text>
        <dbReference type="Rhea" id="RHEA:11824"/>
        <dbReference type="ChEBI" id="CHEBI:11561"/>
        <dbReference type="ChEBI" id="CHEBI:11851"/>
        <dbReference type="ChEBI" id="CHEBI:15377"/>
        <dbReference type="ChEBI" id="CHEBI:15636"/>
        <dbReference type="ChEBI" id="CHEBI:57453"/>
        <dbReference type="EC" id="2.1.2.11"/>
    </reaction>
</comment>
<comment type="cofactor">
    <cofactor evidence="1">
        <name>Mg(2+)</name>
        <dbReference type="ChEBI" id="CHEBI:18420"/>
    </cofactor>
    <text evidence="1">Binds 1 Mg(2+) ion per subunit.</text>
</comment>
<comment type="pathway">
    <text evidence="1">Cofactor biosynthesis; (R)-pantothenate biosynthesis; (R)-pantoate from 3-methyl-2-oxobutanoate: step 1/2.</text>
</comment>
<comment type="subunit">
    <text evidence="1">Homodecamer; pentamer of dimers.</text>
</comment>
<comment type="subcellular location">
    <subcellularLocation>
        <location evidence="1">Cytoplasm</location>
    </subcellularLocation>
</comment>
<comment type="similarity">
    <text evidence="1">Belongs to the PanB family.</text>
</comment>
<keyword id="KW-0963">Cytoplasm</keyword>
<keyword id="KW-0460">Magnesium</keyword>
<keyword id="KW-0479">Metal-binding</keyword>
<keyword id="KW-0566">Pantothenate biosynthesis</keyword>
<keyword id="KW-0808">Transferase</keyword>
<dbReference type="EC" id="2.1.2.11" evidence="1"/>
<dbReference type="EMBL" id="AM920689">
    <property type="protein sequence ID" value="CAP51855.1"/>
    <property type="molecule type" value="Genomic_DNA"/>
</dbReference>
<dbReference type="SMR" id="B0RTU1"/>
<dbReference type="KEGG" id="xca:xcc-b100_2495"/>
<dbReference type="HOGENOM" id="CLU_036645_1_0_6"/>
<dbReference type="UniPathway" id="UPA00028">
    <property type="reaction ID" value="UER00003"/>
</dbReference>
<dbReference type="Proteomes" id="UP000001188">
    <property type="component" value="Chromosome"/>
</dbReference>
<dbReference type="GO" id="GO:0005737">
    <property type="term" value="C:cytoplasm"/>
    <property type="evidence" value="ECO:0007669"/>
    <property type="project" value="UniProtKB-SubCell"/>
</dbReference>
<dbReference type="GO" id="GO:0003864">
    <property type="term" value="F:3-methyl-2-oxobutanoate hydroxymethyltransferase activity"/>
    <property type="evidence" value="ECO:0007669"/>
    <property type="project" value="UniProtKB-UniRule"/>
</dbReference>
<dbReference type="GO" id="GO:0000287">
    <property type="term" value="F:magnesium ion binding"/>
    <property type="evidence" value="ECO:0007669"/>
    <property type="project" value="TreeGrafter"/>
</dbReference>
<dbReference type="GO" id="GO:0015940">
    <property type="term" value="P:pantothenate biosynthetic process"/>
    <property type="evidence" value="ECO:0007669"/>
    <property type="project" value="UniProtKB-UniRule"/>
</dbReference>
<dbReference type="CDD" id="cd06557">
    <property type="entry name" value="KPHMT-like"/>
    <property type="match status" value="1"/>
</dbReference>
<dbReference type="FunFam" id="3.20.20.60:FF:000003">
    <property type="entry name" value="3-methyl-2-oxobutanoate hydroxymethyltransferase"/>
    <property type="match status" value="1"/>
</dbReference>
<dbReference type="Gene3D" id="3.20.20.60">
    <property type="entry name" value="Phosphoenolpyruvate-binding domains"/>
    <property type="match status" value="1"/>
</dbReference>
<dbReference type="HAMAP" id="MF_00156">
    <property type="entry name" value="PanB"/>
    <property type="match status" value="1"/>
</dbReference>
<dbReference type="InterPro" id="IPR003700">
    <property type="entry name" value="Pantoate_hydroxy_MeTrfase"/>
</dbReference>
<dbReference type="InterPro" id="IPR015813">
    <property type="entry name" value="Pyrv/PenolPyrv_kinase-like_dom"/>
</dbReference>
<dbReference type="InterPro" id="IPR040442">
    <property type="entry name" value="Pyrv_kinase-like_dom_sf"/>
</dbReference>
<dbReference type="NCBIfam" id="TIGR00222">
    <property type="entry name" value="panB"/>
    <property type="match status" value="1"/>
</dbReference>
<dbReference type="NCBIfam" id="NF001452">
    <property type="entry name" value="PRK00311.1"/>
    <property type="match status" value="1"/>
</dbReference>
<dbReference type="PANTHER" id="PTHR20881">
    <property type="entry name" value="3-METHYL-2-OXOBUTANOATE HYDROXYMETHYLTRANSFERASE"/>
    <property type="match status" value="1"/>
</dbReference>
<dbReference type="PANTHER" id="PTHR20881:SF0">
    <property type="entry name" value="3-METHYL-2-OXOBUTANOATE HYDROXYMETHYLTRANSFERASE"/>
    <property type="match status" value="1"/>
</dbReference>
<dbReference type="Pfam" id="PF02548">
    <property type="entry name" value="Pantoate_transf"/>
    <property type="match status" value="1"/>
</dbReference>
<dbReference type="PIRSF" id="PIRSF000388">
    <property type="entry name" value="Pantoate_hydroxy_MeTrfase"/>
    <property type="match status" value="1"/>
</dbReference>
<dbReference type="SUPFAM" id="SSF51621">
    <property type="entry name" value="Phosphoenolpyruvate/pyruvate domain"/>
    <property type="match status" value="1"/>
</dbReference>
<reference key="1">
    <citation type="journal article" date="2008" name="J. Biotechnol.">
        <title>The genome of Xanthomonas campestris pv. campestris B100 and its use for the reconstruction of metabolic pathways involved in xanthan biosynthesis.</title>
        <authorList>
            <person name="Vorhoelter F.-J."/>
            <person name="Schneiker S."/>
            <person name="Goesmann A."/>
            <person name="Krause L."/>
            <person name="Bekel T."/>
            <person name="Kaiser O."/>
            <person name="Linke B."/>
            <person name="Patschkowski T."/>
            <person name="Rueckert C."/>
            <person name="Schmid J."/>
            <person name="Sidhu V.K."/>
            <person name="Sieber V."/>
            <person name="Tauch A."/>
            <person name="Watt S.A."/>
            <person name="Weisshaar B."/>
            <person name="Becker A."/>
            <person name="Niehaus K."/>
            <person name="Puehler A."/>
        </authorList>
    </citation>
    <scope>NUCLEOTIDE SEQUENCE [LARGE SCALE GENOMIC DNA]</scope>
    <source>
        <strain>B100</strain>
    </source>
</reference>
<name>PANB_XANCB</name>
<proteinExistence type="inferred from homology"/>
<sequence length="271" mass="28523">MSSHADSKPWTVPALAQAKRDGRKLVMLTAYDAGFARTFDANGVDLILVGDSLGMVVQGHESTLPVTTADMVYHTAAVARVLERALLVADLSFQADATPERALDAATQLLQAGAEMVKIEGAGHKLDVIRYLVEREIPVCSHLGLTPQSVLRFGGYKVQGRGEAGEQLRRDAQAAVDAGVSLIVLECVPTPIAAQISAELRVPTIGIGAGPGCDGQVLVMHDMLGLDSGHRRPKFVKDFLAEGGSVAGAVQAYAQAVRDGSFPDAEHAYAA</sequence>
<organism>
    <name type="scientific">Xanthomonas campestris pv. campestris (strain B100)</name>
    <dbReference type="NCBI Taxonomy" id="509169"/>
    <lineage>
        <taxon>Bacteria</taxon>
        <taxon>Pseudomonadati</taxon>
        <taxon>Pseudomonadota</taxon>
        <taxon>Gammaproteobacteria</taxon>
        <taxon>Lysobacterales</taxon>
        <taxon>Lysobacteraceae</taxon>
        <taxon>Xanthomonas</taxon>
    </lineage>
</organism>
<accession>B0RTU1</accession>
<feature type="chain" id="PRO_1000097018" description="3-methyl-2-oxobutanoate hydroxymethyltransferase">
    <location>
        <begin position="1"/>
        <end position="271"/>
    </location>
</feature>
<feature type="active site" description="Proton acceptor" evidence="1">
    <location>
        <position position="186"/>
    </location>
</feature>
<feature type="binding site" evidence="1">
    <location>
        <begin position="51"/>
        <end position="52"/>
    </location>
    <ligand>
        <name>3-methyl-2-oxobutanoate</name>
        <dbReference type="ChEBI" id="CHEBI:11851"/>
    </ligand>
</feature>
<feature type="binding site" evidence="1">
    <location>
        <position position="51"/>
    </location>
    <ligand>
        <name>Mg(2+)</name>
        <dbReference type="ChEBI" id="CHEBI:18420"/>
    </ligand>
</feature>
<feature type="binding site" evidence="1">
    <location>
        <position position="90"/>
    </location>
    <ligand>
        <name>3-methyl-2-oxobutanoate</name>
        <dbReference type="ChEBI" id="CHEBI:11851"/>
    </ligand>
</feature>
<feature type="binding site" evidence="1">
    <location>
        <position position="90"/>
    </location>
    <ligand>
        <name>Mg(2+)</name>
        <dbReference type="ChEBI" id="CHEBI:18420"/>
    </ligand>
</feature>
<feature type="binding site" evidence="1">
    <location>
        <position position="118"/>
    </location>
    <ligand>
        <name>3-methyl-2-oxobutanoate</name>
        <dbReference type="ChEBI" id="CHEBI:11851"/>
    </ligand>
</feature>
<feature type="binding site" evidence="1">
    <location>
        <position position="120"/>
    </location>
    <ligand>
        <name>Mg(2+)</name>
        <dbReference type="ChEBI" id="CHEBI:18420"/>
    </ligand>
</feature>
<evidence type="ECO:0000255" key="1">
    <source>
        <dbReference type="HAMAP-Rule" id="MF_00156"/>
    </source>
</evidence>
<protein>
    <recommendedName>
        <fullName evidence="1">3-methyl-2-oxobutanoate hydroxymethyltransferase</fullName>
        <ecNumber evidence="1">2.1.2.11</ecNumber>
    </recommendedName>
    <alternativeName>
        <fullName evidence="1">Ketopantoate hydroxymethyltransferase</fullName>
        <shortName evidence="1">KPHMT</shortName>
    </alternativeName>
</protein>
<gene>
    <name evidence="1" type="primary">panB</name>
    <name type="ordered locus">xcc-b100_2495</name>
</gene>